<protein>
    <recommendedName>
        <fullName evidence="4">Beta/delta-ctenitoxin-Pr1a</fullName>
        <shortName evidence="4">Beta/delta-CNTX-Pr1a</shortName>
    </recommendedName>
    <alternativeName>
        <fullName evidence="3">Beta/delta-PrIT1</fullName>
    </alternativeName>
</protein>
<feature type="chain" id="PRO_0000444577" description="Beta/delta-ctenitoxin-Pr1a" evidence="5">
    <location>
        <begin position="1"/>
        <end position="40" status="greater than"/>
    </location>
</feature>
<feature type="disulfide bond" evidence="4">
    <location>
        <begin position="1"/>
        <end position="15"/>
    </location>
</feature>
<feature type="disulfide bond" evidence="4">
    <location>
        <begin position="8"/>
        <end position="21"/>
    </location>
</feature>
<feature type="disulfide bond" evidence="4">
    <location>
        <begin position="12"/>
        <end status="unknown"/>
    </location>
</feature>
<feature type="disulfide bond" evidence="4">
    <location>
        <begin position="14"/>
        <end position="31"/>
    </location>
</feature>
<feature type="disulfide bond" evidence="4">
    <location>
        <begin position="23"/>
        <end position="29"/>
    </location>
</feature>
<feature type="non-terminal residue" evidence="4">
    <location>
        <position position="40"/>
    </location>
</feature>
<evidence type="ECO:0000250" key="1">
    <source>
        <dbReference type="UniProtKB" id="P59367"/>
    </source>
</evidence>
<evidence type="ECO:0000269" key="2">
    <source>
    </source>
</evidence>
<evidence type="ECO:0000303" key="3">
    <source>
    </source>
</evidence>
<evidence type="ECO:0000305" key="4"/>
<evidence type="ECO:0000305" key="5">
    <source>
    </source>
</evidence>
<sequence>CGDINAPCQSDCDCCGYSVTCDCYWGNECKCRESNFAIGM</sequence>
<accession>P0DPG7</accession>
<name>TX35A_PHORI</name>
<proteinExistence type="evidence at protein level"/>
<reference key="1">
    <citation type="journal article" date="2015" name="Toxicon">
        <title>beta/delta-PrIT1, a highly insecticidal toxin from the venom of the Brazilian spider Phoneutria reidyi (F.O. Pickard-Cambridge, 1897).</title>
        <authorList>
            <person name="de Oliveira L.C."/>
            <person name="Campos F.V."/>
            <person name="Figueiredo S.G."/>
            <person name="Cordeiro M.N."/>
            <person name="Adaime B.R."/>
            <person name="Richardson M."/>
            <person name="Pimenta A.M."/>
            <person name="Martin-Eauclaire M.F."/>
            <person name="Beirao P.S."/>
            <person name="De Lima M.E."/>
        </authorList>
    </citation>
    <scope>PROTEIN SEQUENCE</scope>
    <scope>FUNCTION</scope>
    <scope>TOXIC DOSE</scope>
    <scope>MASS SPECTROMETRY</scope>
    <scope>SUBCELLULAR LOCATION</scope>
    <scope>BIOASSAY</scope>
    <source>
        <tissue>Venom</tissue>
    </source>
</reference>
<dbReference type="SMR" id="P0DPG7"/>
<dbReference type="GO" id="GO:0005576">
    <property type="term" value="C:extracellular region"/>
    <property type="evidence" value="ECO:0007669"/>
    <property type="project" value="UniProtKB-SubCell"/>
</dbReference>
<dbReference type="GO" id="GO:0035792">
    <property type="term" value="C:host cell postsynaptic membrane"/>
    <property type="evidence" value="ECO:0007669"/>
    <property type="project" value="UniProtKB-KW"/>
</dbReference>
<dbReference type="GO" id="GO:0017080">
    <property type="term" value="F:sodium channel regulator activity"/>
    <property type="evidence" value="ECO:0007669"/>
    <property type="project" value="UniProtKB-KW"/>
</dbReference>
<dbReference type="GO" id="GO:0090729">
    <property type="term" value="F:toxin activity"/>
    <property type="evidence" value="ECO:0007669"/>
    <property type="project" value="UniProtKB-KW"/>
</dbReference>
<keyword id="KW-0903">Direct protein sequencing</keyword>
<keyword id="KW-1015">Disulfide bond</keyword>
<keyword id="KW-0872">Ion channel impairing toxin</keyword>
<keyword id="KW-1028">Ionotropic glutamate receptor inhibitor</keyword>
<keyword id="KW-0960">Knottin</keyword>
<keyword id="KW-0528">Neurotoxin</keyword>
<keyword id="KW-0629">Postsynaptic neurotoxin</keyword>
<keyword id="KW-0964">Secreted</keyword>
<keyword id="KW-0800">Toxin</keyword>
<keyword id="KW-0738">Voltage-gated sodium channel impairing toxin</keyword>
<comment type="function">
    <text evidence="1 2">Potent insecticidal toxin that binds to two distinct sites in insect sodium channels, with close affinity (Kd1=34.7 pM and Kd2=35.1 pM) (PubMed:26220799). Its association is rather fast (1.4 and 8.5 minutes, respectively for sites 1 and 2) and its dissociation is a slower process (5.4 and 32.8 minutes, respectively) (PubMed:26220799). On rat brain synaptosomes the toxin partially competes (~30%) with the beta-toxin CssIV, but does not compete with the alpha-toxin AaII, nor with the beta-toxin Ts VII (PubMed:26220799). On cockroach nerve cord synaptosomes, the toxin does not compete with the anti-insect toxin LqqIT1, but it competes with the 'alpha-like' toxin BomIV (IC(50)=80 pM) (PubMed:26220799). In cockroach neurons, the toxin inhibits the inactivation of sodium channels and it shifts the sodium channel activation to hyperpolarizing potentials (PubMed:26220799). Hence, it behaves like an 'alpha-like' toxin and binds preferentially to site 3 on the insect Nav channel, located on the domain IV (PubMed:26220799). The toxin may also inhibit the N-methyl-D-aspartate (NMDA)-subtype of ionotropic glutamate receptor (GRIN) (By similarity). In vivo, the toxin causes excitatory effects on insects (PubMed:26220799).</text>
</comment>
<comment type="subcellular location">
    <subcellularLocation>
        <location evidence="2">Secreted</location>
    </subcellularLocation>
</comment>
<comment type="tissue specificity">
    <text evidence="5">Expressed by the venom gland.</text>
</comment>
<comment type="domain">
    <text evidence="4">The presence of a 'disulfide through disulfide knot' structurally defines this protein as a knottin.</text>
</comment>
<comment type="mass spectrometry"/>
<comment type="toxic dose">
    <text evidence="2">LD(50) is 4 nmol/g in flies (M.domestica).</text>
</comment>
<comment type="toxic dose">
    <text evidence="2">LD(50) is 230 pmol/g in cockroaches (P.americana).</text>
</comment>
<comment type="miscellaneous">
    <text evidence="2">Is not toxic to mice (30 ug per mouse tested by intracerebroventricular injection).</text>
</comment>
<comment type="similarity">
    <text evidence="4">Belongs to the neurotoxin 03 (Tx2) family. 05 subfamily.</text>
</comment>
<organism>
    <name type="scientific">Phoneutria reidyi</name>
    <name type="common">Brazilian Amazonian armed spider</name>
    <name type="synonym">Ctenus reidyi</name>
    <dbReference type="NCBI Taxonomy" id="272752"/>
    <lineage>
        <taxon>Eukaryota</taxon>
        <taxon>Metazoa</taxon>
        <taxon>Ecdysozoa</taxon>
        <taxon>Arthropoda</taxon>
        <taxon>Chelicerata</taxon>
        <taxon>Arachnida</taxon>
        <taxon>Araneae</taxon>
        <taxon>Araneomorphae</taxon>
        <taxon>Entelegynae</taxon>
        <taxon>Lycosoidea</taxon>
        <taxon>Ctenidae</taxon>
        <taxon>Phoneutria</taxon>
    </lineage>
</organism>